<name>GLYA_CUPNH</name>
<sequence length="415" mass="45112">MFERSRFTIDQIDPEVFAAIQQENQRQEDHIELIASENYTSPAVMAAQGSQLTNKYAEGYPGKRYYGGCEYVDVVEQLAIDRVKQLFGAEAANVQPNSGSQANQGVYFAVLKPGDTIMGMSLAEGGHLTHGMALNMSGKWFNVVSYGLNAQEDIDYDALEKLAQEKKPKLIIAGASAFALRIDFERISKVAKSIGAYFMVDMAHYAGLIAAGVYPNPVPHADFVTTTTHKSLRGPRGGVILMKAEHEKAINSAIFPGIQGGPLMHVIAGKAVAFKEALTPEFKEYQQQVVKNAAVLAETLIARGLRIVSGRTESHVMLVDLRAKNITGKEAERILGEAHITVNKNAIPNDPEKPFVTSGIRLGSPAMTTRGFKEEEARIVGNLIADVLDNPHDAANIASVREQAAALTKRFPVYG</sequence>
<protein>
    <recommendedName>
        <fullName evidence="1">Serine hydroxymethyltransferase</fullName>
        <shortName evidence="1">SHMT</shortName>
        <shortName evidence="1">Serine methylase</shortName>
        <ecNumber evidence="1">2.1.2.1</ecNumber>
    </recommendedName>
</protein>
<feature type="chain" id="PRO_1000006302" description="Serine hydroxymethyltransferase">
    <location>
        <begin position="1"/>
        <end position="415"/>
    </location>
</feature>
<feature type="binding site" evidence="1">
    <location>
        <position position="122"/>
    </location>
    <ligand>
        <name>(6S)-5,6,7,8-tetrahydrofolate</name>
        <dbReference type="ChEBI" id="CHEBI:57453"/>
    </ligand>
</feature>
<feature type="binding site" evidence="1">
    <location>
        <begin position="126"/>
        <end position="128"/>
    </location>
    <ligand>
        <name>(6S)-5,6,7,8-tetrahydrofolate</name>
        <dbReference type="ChEBI" id="CHEBI:57453"/>
    </ligand>
</feature>
<feature type="site" description="Plays an important role in substrate specificity" evidence="1">
    <location>
        <position position="229"/>
    </location>
</feature>
<feature type="modified residue" description="N6-(pyridoxal phosphate)lysine" evidence="1">
    <location>
        <position position="230"/>
    </location>
</feature>
<dbReference type="EC" id="2.1.2.1" evidence="1"/>
<dbReference type="EMBL" id="AM260479">
    <property type="protein sequence ID" value="CAJ93911.1"/>
    <property type="molecule type" value="Genomic_DNA"/>
</dbReference>
<dbReference type="RefSeq" id="WP_010813742.1">
    <property type="nucleotide sequence ID" value="NZ_CP039287.1"/>
</dbReference>
<dbReference type="SMR" id="Q0K7W0"/>
<dbReference type="STRING" id="381666.H16_A2834"/>
<dbReference type="KEGG" id="reh:H16_A2834"/>
<dbReference type="eggNOG" id="COG0112">
    <property type="taxonomic scope" value="Bacteria"/>
</dbReference>
<dbReference type="HOGENOM" id="CLU_022477_2_1_4"/>
<dbReference type="OrthoDB" id="9803846at2"/>
<dbReference type="UniPathway" id="UPA00193"/>
<dbReference type="UniPathway" id="UPA00288">
    <property type="reaction ID" value="UER01023"/>
</dbReference>
<dbReference type="Proteomes" id="UP000008210">
    <property type="component" value="Chromosome 1"/>
</dbReference>
<dbReference type="GO" id="GO:0005829">
    <property type="term" value="C:cytosol"/>
    <property type="evidence" value="ECO:0007669"/>
    <property type="project" value="TreeGrafter"/>
</dbReference>
<dbReference type="GO" id="GO:0004372">
    <property type="term" value="F:glycine hydroxymethyltransferase activity"/>
    <property type="evidence" value="ECO:0007669"/>
    <property type="project" value="UniProtKB-UniRule"/>
</dbReference>
<dbReference type="GO" id="GO:0030170">
    <property type="term" value="F:pyridoxal phosphate binding"/>
    <property type="evidence" value="ECO:0007669"/>
    <property type="project" value="UniProtKB-UniRule"/>
</dbReference>
<dbReference type="GO" id="GO:0019264">
    <property type="term" value="P:glycine biosynthetic process from serine"/>
    <property type="evidence" value="ECO:0007669"/>
    <property type="project" value="UniProtKB-UniRule"/>
</dbReference>
<dbReference type="GO" id="GO:0035999">
    <property type="term" value="P:tetrahydrofolate interconversion"/>
    <property type="evidence" value="ECO:0007669"/>
    <property type="project" value="UniProtKB-UniRule"/>
</dbReference>
<dbReference type="CDD" id="cd00378">
    <property type="entry name" value="SHMT"/>
    <property type="match status" value="1"/>
</dbReference>
<dbReference type="FunFam" id="3.40.640.10:FF:000001">
    <property type="entry name" value="Serine hydroxymethyltransferase"/>
    <property type="match status" value="1"/>
</dbReference>
<dbReference type="FunFam" id="3.90.1150.10:FF:000003">
    <property type="entry name" value="Serine hydroxymethyltransferase"/>
    <property type="match status" value="1"/>
</dbReference>
<dbReference type="Gene3D" id="3.90.1150.10">
    <property type="entry name" value="Aspartate Aminotransferase, domain 1"/>
    <property type="match status" value="1"/>
</dbReference>
<dbReference type="Gene3D" id="3.40.640.10">
    <property type="entry name" value="Type I PLP-dependent aspartate aminotransferase-like (Major domain)"/>
    <property type="match status" value="1"/>
</dbReference>
<dbReference type="HAMAP" id="MF_00051">
    <property type="entry name" value="SHMT"/>
    <property type="match status" value="1"/>
</dbReference>
<dbReference type="InterPro" id="IPR015424">
    <property type="entry name" value="PyrdxlP-dep_Trfase"/>
</dbReference>
<dbReference type="InterPro" id="IPR015421">
    <property type="entry name" value="PyrdxlP-dep_Trfase_major"/>
</dbReference>
<dbReference type="InterPro" id="IPR015422">
    <property type="entry name" value="PyrdxlP-dep_Trfase_small"/>
</dbReference>
<dbReference type="InterPro" id="IPR001085">
    <property type="entry name" value="Ser_HO-MeTrfase"/>
</dbReference>
<dbReference type="InterPro" id="IPR049943">
    <property type="entry name" value="Ser_HO-MeTrfase-like"/>
</dbReference>
<dbReference type="InterPro" id="IPR019798">
    <property type="entry name" value="Ser_HO-MeTrfase_PLP_BS"/>
</dbReference>
<dbReference type="InterPro" id="IPR039429">
    <property type="entry name" value="SHMT-like_dom"/>
</dbReference>
<dbReference type="NCBIfam" id="NF000586">
    <property type="entry name" value="PRK00011.1"/>
    <property type="match status" value="1"/>
</dbReference>
<dbReference type="PANTHER" id="PTHR11680">
    <property type="entry name" value="SERINE HYDROXYMETHYLTRANSFERASE"/>
    <property type="match status" value="1"/>
</dbReference>
<dbReference type="PANTHER" id="PTHR11680:SF50">
    <property type="entry name" value="SERINE HYDROXYMETHYLTRANSFERASE"/>
    <property type="match status" value="1"/>
</dbReference>
<dbReference type="Pfam" id="PF00464">
    <property type="entry name" value="SHMT"/>
    <property type="match status" value="1"/>
</dbReference>
<dbReference type="PIRSF" id="PIRSF000412">
    <property type="entry name" value="SHMT"/>
    <property type="match status" value="1"/>
</dbReference>
<dbReference type="SUPFAM" id="SSF53383">
    <property type="entry name" value="PLP-dependent transferases"/>
    <property type="match status" value="1"/>
</dbReference>
<dbReference type="PROSITE" id="PS00096">
    <property type="entry name" value="SHMT"/>
    <property type="match status" value="1"/>
</dbReference>
<accession>Q0K7W0</accession>
<evidence type="ECO:0000255" key="1">
    <source>
        <dbReference type="HAMAP-Rule" id="MF_00051"/>
    </source>
</evidence>
<proteinExistence type="inferred from homology"/>
<keyword id="KW-0028">Amino-acid biosynthesis</keyword>
<keyword id="KW-0963">Cytoplasm</keyword>
<keyword id="KW-0554">One-carbon metabolism</keyword>
<keyword id="KW-0663">Pyridoxal phosphate</keyword>
<keyword id="KW-1185">Reference proteome</keyword>
<keyword id="KW-0808">Transferase</keyword>
<gene>
    <name evidence="1" type="primary">glyA</name>
    <name type="ordered locus">H16_A2834</name>
</gene>
<reference key="1">
    <citation type="journal article" date="2006" name="Nat. Biotechnol.">
        <title>Genome sequence of the bioplastic-producing 'Knallgas' bacterium Ralstonia eutropha H16.</title>
        <authorList>
            <person name="Pohlmann A."/>
            <person name="Fricke W.F."/>
            <person name="Reinecke F."/>
            <person name="Kusian B."/>
            <person name="Liesegang H."/>
            <person name="Cramm R."/>
            <person name="Eitinger T."/>
            <person name="Ewering C."/>
            <person name="Poetter M."/>
            <person name="Schwartz E."/>
            <person name="Strittmatter A."/>
            <person name="Voss I."/>
            <person name="Gottschalk G."/>
            <person name="Steinbuechel A."/>
            <person name="Friedrich B."/>
            <person name="Bowien B."/>
        </authorList>
    </citation>
    <scope>NUCLEOTIDE SEQUENCE [LARGE SCALE GENOMIC DNA]</scope>
    <source>
        <strain>ATCC 17699 / DSM 428 / KCTC 22496 / NCIMB 10442 / H16 / Stanier 337</strain>
    </source>
</reference>
<organism>
    <name type="scientific">Cupriavidus necator (strain ATCC 17699 / DSM 428 / KCTC 22496 / NCIMB 10442 / H16 / Stanier 337)</name>
    <name type="common">Ralstonia eutropha</name>
    <dbReference type="NCBI Taxonomy" id="381666"/>
    <lineage>
        <taxon>Bacteria</taxon>
        <taxon>Pseudomonadati</taxon>
        <taxon>Pseudomonadota</taxon>
        <taxon>Betaproteobacteria</taxon>
        <taxon>Burkholderiales</taxon>
        <taxon>Burkholderiaceae</taxon>
        <taxon>Cupriavidus</taxon>
    </lineage>
</organism>
<comment type="function">
    <text evidence="1">Catalyzes the reversible interconversion of serine and glycine with tetrahydrofolate (THF) serving as the one-carbon carrier. This reaction serves as the major source of one-carbon groups required for the biosynthesis of purines, thymidylate, methionine, and other important biomolecules. Also exhibits THF-independent aldolase activity toward beta-hydroxyamino acids, producing glycine and aldehydes, via a retro-aldol mechanism.</text>
</comment>
<comment type="catalytic activity">
    <reaction evidence="1">
        <text>(6R)-5,10-methylene-5,6,7,8-tetrahydrofolate + glycine + H2O = (6S)-5,6,7,8-tetrahydrofolate + L-serine</text>
        <dbReference type="Rhea" id="RHEA:15481"/>
        <dbReference type="ChEBI" id="CHEBI:15377"/>
        <dbReference type="ChEBI" id="CHEBI:15636"/>
        <dbReference type="ChEBI" id="CHEBI:33384"/>
        <dbReference type="ChEBI" id="CHEBI:57305"/>
        <dbReference type="ChEBI" id="CHEBI:57453"/>
        <dbReference type="EC" id="2.1.2.1"/>
    </reaction>
</comment>
<comment type="cofactor">
    <cofactor evidence="1">
        <name>pyridoxal 5'-phosphate</name>
        <dbReference type="ChEBI" id="CHEBI:597326"/>
    </cofactor>
</comment>
<comment type="pathway">
    <text evidence="1">One-carbon metabolism; tetrahydrofolate interconversion.</text>
</comment>
<comment type="pathway">
    <text evidence="1">Amino-acid biosynthesis; glycine biosynthesis; glycine from L-serine: step 1/1.</text>
</comment>
<comment type="subunit">
    <text evidence="1">Homodimer.</text>
</comment>
<comment type="subcellular location">
    <subcellularLocation>
        <location evidence="1">Cytoplasm</location>
    </subcellularLocation>
</comment>
<comment type="similarity">
    <text evidence="1">Belongs to the SHMT family.</text>
</comment>